<name>MSHB_COREF</name>
<gene>
    <name evidence="1" type="primary">mshB</name>
    <name type="ordered locus">CE1158</name>
</gene>
<reference key="1">
    <citation type="journal article" date="2003" name="Genome Res.">
        <title>Comparative complete genome sequence analysis of the amino acid replacements responsible for the thermostability of Corynebacterium efficiens.</title>
        <authorList>
            <person name="Nishio Y."/>
            <person name="Nakamura Y."/>
            <person name="Kawarabayasi Y."/>
            <person name="Usuda Y."/>
            <person name="Kimura E."/>
            <person name="Sugimoto S."/>
            <person name="Matsui K."/>
            <person name="Yamagishi A."/>
            <person name="Kikuchi H."/>
            <person name="Ikeo K."/>
            <person name="Gojobori T."/>
        </authorList>
    </citation>
    <scope>NUCLEOTIDE SEQUENCE [LARGE SCALE GENOMIC DNA]</scope>
    <source>
        <strain>DSM 44549 / YS-314 / AJ 12310 / JCM 11189 / NBRC 100395</strain>
    </source>
</reference>
<protein>
    <recommendedName>
        <fullName evidence="1">1D-myo-inositol 2-acetamido-2-deoxy-alpha-D-glucopyranoside deacetylase</fullName>
        <shortName evidence="1">GlcNAc-Ins deacetylase</shortName>
        <ecNumber evidence="1">3.5.1.103</ecNumber>
    </recommendedName>
    <alternativeName>
        <fullName>N-acetyl-1-D-myo-inositol 2-amino-2-deoxy-alpha-D-glucopyranoside deacetylase</fullName>
    </alternativeName>
</protein>
<keyword id="KW-0378">Hydrolase</keyword>
<keyword id="KW-0479">Metal-binding</keyword>
<keyword id="KW-1185">Reference proteome</keyword>
<keyword id="KW-0862">Zinc</keyword>
<proteinExistence type="inferred from homology"/>
<feature type="chain" id="PRO_0000400177" description="1D-myo-inositol 2-acetamido-2-deoxy-alpha-D-glucopyranoside deacetylase">
    <location>
        <begin position="1"/>
        <end position="311"/>
    </location>
</feature>
<feature type="binding site" evidence="1">
    <location>
        <position position="29"/>
    </location>
    <ligand>
        <name>Zn(2+)</name>
        <dbReference type="ChEBI" id="CHEBI:29105"/>
    </ligand>
</feature>
<feature type="binding site" evidence="1">
    <location>
        <position position="32"/>
    </location>
    <ligand>
        <name>Zn(2+)</name>
        <dbReference type="ChEBI" id="CHEBI:29105"/>
    </ligand>
</feature>
<feature type="binding site" evidence="1">
    <location>
        <position position="162"/>
    </location>
    <ligand>
        <name>Zn(2+)</name>
        <dbReference type="ChEBI" id="CHEBI:29105"/>
    </ligand>
</feature>
<comment type="function">
    <text evidence="1">Catalyzes the deacetylation of 1D-myo-inositol 2-acetamido-2-deoxy-alpha-D-glucopyranoside (GlcNAc-Ins) in the mycothiol biosynthesis pathway.</text>
</comment>
<comment type="catalytic activity">
    <reaction evidence="1">
        <text>1D-myo-inositol 2-acetamido-2-deoxy-alpha-D-glucopyranoside + H2O = 1D-myo-inositol 2-amino-2-deoxy-alpha-D-glucopyranoside + acetate</text>
        <dbReference type="Rhea" id="RHEA:26180"/>
        <dbReference type="ChEBI" id="CHEBI:15377"/>
        <dbReference type="ChEBI" id="CHEBI:30089"/>
        <dbReference type="ChEBI" id="CHEBI:52442"/>
        <dbReference type="ChEBI" id="CHEBI:58886"/>
        <dbReference type="EC" id="3.5.1.103"/>
    </reaction>
</comment>
<comment type="cofactor">
    <cofactor evidence="1">
        <name>Zn(2+)</name>
        <dbReference type="ChEBI" id="CHEBI:29105"/>
    </cofactor>
    <text evidence="1">Binds 1 zinc ion per subunit.</text>
</comment>
<comment type="similarity">
    <text evidence="1">Belongs to the MshB deacetylase family.</text>
</comment>
<dbReference type="EC" id="3.5.1.103" evidence="1"/>
<dbReference type="EMBL" id="BA000035">
    <property type="protein sequence ID" value="BAC17968.1"/>
    <property type="molecule type" value="Genomic_DNA"/>
</dbReference>
<dbReference type="SMR" id="Q8FQG1"/>
<dbReference type="STRING" id="196164.gene:10741566"/>
<dbReference type="KEGG" id="cef:CE1158"/>
<dbReference type="eggNOG" id="COG2120">
    <property type="taxonomic scope" value="Bacteria"/>
</dbReference>
<dbReference type="HOGENOM" id="CLU_049311_2_1_11"/>
<dbReference type="OrthoDB" id="158614at2"/>
<dbReference type="Proteomes" id="UP000001409">
    <property type="component" value="Chromosome"/>
</dbReference>
<dbReference type="GO" id="GO:0035595">
    <property type="term" value="F:N-acetylglucosaminylinositol deacetylase activity"/>
    <property type="evidence" value="ECO:0007669"/>
    <property type="project" value="UniProtKB-EC"/>
</dbReference>
<dbReference type="GO" id="GO:0008270">
    <property type="term" value="F:zinc ion binding"/>
    <property type="evidence" value="ECO:0007669"/>
    <property type="project" value="UniProtKB-UniRule"/>
</dbReference>
<dbReference type="GO" id="GO:0010125">
    <property type="term" value="P:mycothiol biosynthetic process"/>
    <property type="evidence" value="ECO:0007669"/>
    <property type="project" value="UniProtKB-UniRule"/>
</dbReference>
<dbReference type="Gene3D" id="3.40.50.10320">
    <property type="entry name" value="LmbE-like"/>
    <property type="match status" value="1"/>
</dbReference>
<dbReference type="HAMAP" id="MF_01696">
    <property type="entry name" value="MshB"/>
    <property type="match status" value="1"/>
</dbReference>
<dbReference type="InterPro" id="IPR003737">
    <property type="entry name" value="GlcNAc_PI_deacetylase-related"/>
</dbReference>
<dbReference type="InterPro" id="IPR024078">
    <property type="entry name" value="LmbE-like_dom_sf"/>
</dbReference>
<dbReference type="InterPro" id="IPR017810">
    <property type="entry name" value="Mycothiol_biosynthesis_MshB"/>
</dbReference>
<dbReference type="NCBIfam" id="TIGR03445">
    <property type="entry name" value="mycothiol_MshB"/>
    <property type="match status" value="1"/>
</dbReference>
<dbReference type="PANTHER" id="PTHR12993:SF26">
    <property type="entry name" value="1D-MYO-INOSITOL 2-ACETAMIDO-2-DEOXY-ALPHA-D-GLUCOPYRANOSIDE DEACETYLASE"/>
    <property type="match status" value="1"/>
</dbReference>
<dbReference type="PANTHER" id="PTHR12993">
    <property type="entry name" value="N-ACETYLGLUCOSAMINYL-PHOSPHATIDYLINOSITOL DE-N-ACETYLASE-RELATED"/>
    <property type="match status" value="1"/>
</dbReference>
<dbReference type="Pfam" id="PF02585">
    <property type="entry name" value="PIG-L"/>
    <property type="match status" value="1"/>
</dbReference>
<dbReference type="SUPFAM" id="SSF102588">
    <property type="entry name" value="LmbE-like"/>
    <property type="match status" value="1"/>
</dbReference>
<sequence length="311" mass="33230">MASRAQRTGGRMILHNDLSGLRVVAVHAHPDDEAITTGGALHHLATRGADVTVVTCTLGEQGEVIGETWQQLVNGDADQLGGFRIHELLSSLRILGASGCFLGGAGRWRDSGMVGDPANDHPRSFVRSGDQAEEQLVEIFTMLRPHLVITYGPDGGYGHPDHIRAHEITHGAAGRVEGIQRILWAVTGRTDLQAGLDAISAVPTGWRAAGDDELACQDRVDFALELDDRAYHAKVESMRAHATQLWIADGGVSDTNPHAAFAEVTDRAAAPVVFALSNLIAQPVMRREHYQLGAGTAFPADAQGPADGLQW</sequence>
<organism>
    <name type="scientific">Corynebacterium efficiens (strain DSM 44549 / YS-314 / AJ 12310 / JCM 11189 / NBRC 100395)</name>
    <dbReference type="NCBI Taxonomy" id="196164"/>
    <lineage>
        <taxon>Bacteria</taxon>
        <taxon>Bacillati</taxon>
        <taxon>Actinomycetota</taxon>
        <taxon>Actinomycetes</taxon>
        <taxon>Mycobacteriales</taxon>
        <taxon>Corynebacteriaceae</taxon>
        <taxon>Corynebacterium</taxon>
    </lineage>
</organism>
<accession>Q8FQG1</accession>
<evidence type="ECO:0000255" key="1">
    <source>
        <dbReference type="HAMAP-Rule" id="MF_01696"/>
    </source>
</evidence>